<keyword id="KW-0121">Carboxypeptidase</keyword>
<keyword id="KW-1015">Disulfide bond</keyword>
<keyword id="KW-0325">Glycoprotein</keyword>
<keyword id="KW-0378">Hydrolase</keyword>
<keyword id="KW-0645">Protease</keyword>
<keyword id="KW-1185">Reference proteome</keyword>
<keyword id="KW-0732">Signal</keyword>
<keyword id="KW-0926">Vacuole</keyword>
<keyword id="KW-0865">Zymogen</keyword>
<feature type="signal peptide" evidence="2">
    <location>
        <begin position="1"/>
        <end position="17"/>
    </location>
</feature>
<feature type="propeptide" id="PRO_0000407478" evidence="1">
    <location>
        <begin position="18"/>
        <end position="137"/>
    </location>
</feature>
<feature type="chain" id="PRO_0000407479" description="Carboxypeptidase Y homolog A">
    <location>
        <begin position="138"/>
        <end position="554"/>
    </location>
</feature>
<feature type="active site" evidence="3">
    <location>
        <position position="278"/>
    </location>
</feature>
<feature type="active site" evidence="3">
    <location>
        <position position="470"/>
    </location>
</feature>
<feature type="active site" evidence="3">
    <location>
        <position position="529"/>
    </location>
</feature>
<feature type="glycosylation site" description="N-linked (GlcNAc...) asparagine" evidence="2">
    <location>
        <position position="222"/>
    </location>
</feature>
<feature type="glycosylation site" description="N-linked (GlcNAc...) asparagine" evidence="2">
    <location>
        <position position="518"/>
    </location>
</feature>
<feature type="disulfide bond" evidence="1">
    <location>
        <begin position="191"/>
        <end position="431"/>
    </location>
</feature>
<feature type="disulfide bond" evidence="1">
    <location>
        <begin position="325"/>
        <end position="339"/>
    </location>
</feature>
<feature type="disulfide bond" evidence="1">
    <location>
        <begin position="349"/>
        <end position="372"/>
    </location>
</feature>
<feature type="disulfide bond" evidence="1">
    <location>
        <begin position="356"/>
        <end position="365"/>
    </location>
</feature>
<feature type="disulfide bond" evidence="1">
    <location>
        <begin position="394"/>
        <end position="401"/>
    </location>
</feature>
<protein>
    <recommendedName>
        <fullName>Carboxypeptidase Y homolog A</fullName>
        <ecNumber>3.4.16.5</ecNumber>
    </recommendedName>
</protein>
<organism>
    <name type="scientific">Sordaria macrospora (strain ATCC MYA-333 / DSM 997 / K(L3346) / K-hell)</name>
    <dbReference type="NCBI Taxonomy" id="771870"/>
    <lineage>
        <taxon>Eukaryota</taxon>
        <taxon>Fungi</taxon>
        <taxon>Dikarya</taxon>
        <taxon>Ascomycota</taxon>
        <taxon>Pezizomycotina</taxon>
        <taxon>Sordariomycetes</taxon>
        <taxon>Sordariomycetidae</taxon>
        <taxon>Sordariales</taxon>
        <taxon>Sordariaceae</taxon>
        <taxon>Sordaria</taxon>
    </lineage>
</organism>
<sequence length="554" mass="62144">MRISASTVLLGAASAASAASFQNQAQQVLADNFHKAHDAIKPVADSFAHTTLESFEEAFNGMNSQAKALWDEIKLLVPESAFDKPTWFSKPKAAKRRKDWDHVVKGADVQKLWVKGADGEKHREVGGQLDNFNLRVKSVDPSKLGVDKVKQYSGYLDDEANDKHLFYWFFESRNDPKNDPVVLWLNGGPGCSSLTGLFLELGPSSIDKKLKVINNEYAWNNNASVIFLDQPVNVGYSYSGNAVSNTVAAGKDVYALLTLFFHQFPEYAKQDFHIAGESYAGHYIPVFASEILSHKDRNINLKSVLIGNGLTDPLTQYEHYRPMACGEGGYPAVLSESECRSMDNALPRCQSLIRNCYESGSVWSCVPAAIYCNNQFIGPYQRTGQNVYDIRGKCEDDNNLCYSALGWISDYLNQKDVMDALGVEVESYDSCNFDINRNFLFQGDWMQPFHRLVPGILKEIPVLIYAGDADFICNWLGNKAWSEALEWPGKKGFNKAELEDLSLPEADKEYGKVKSSGNFTFMQIYQAGHMVPMDQPENSLDFLNRWLGGEWFEQ</sequence>
<comment type="function">
    <text evidence="1">Vacuolar carboxypeptidase involved in degradation of small peptides. Digests preferentially peptides containing an aliphatic or hydrophobic residue in P1' position, as well as methionine, leucine or phenylalanine in P1 position of ester substrate (By similarity).</text>
</comment>
<comment type="catalytic activity">
    <reaction evidence="3">
        <text>Release of a C-terminal amino acid with broad specificity.</text>
        <dbReference type="EC" id="3.4.16.5"/>
    </reaction>
</comment>
<comment type="subcellular location">
    <subcellularLocation>
        <location evidence="1">Vacuole</location>
    </subcellularLocation>
</comment>
<comment type="similarity">
    <text evidence="4">Belongs to the peptidase S10 family.</text>
</comment>
<evidence type="ECO:0000250" key="1"/>
<evidence type="ECO:0000255" key="2"/>
<evidence type="ECO:0000255" key="3">
    <source>
        <dbReference type="PROSITE-ProRule" id="PRU10074"/>
    </source>
</evidence>
<evidence type="ECO:0000305" key="4"/>
<gene>
    <name type="primary">CPYA</name>
    <name type="ORF">SMAC_01911</name>
</gene>
<accession>D1ZG13</accession>
<accession>F7VS77</accession>
<reference key="1">
    <citation type="journal article" date="2010" name="PLoS Genet.">
        <title>De novo assembly of a 40 Mb eukaryotic genome from short sequence reads: Sordaria macrospora, a model organism for fungal morphogenesis.</title>
        <authorList>
            <person name="Nowrousian M."/>
            <person name="Stajich J.E."/>
            <person name="Chu M."/>
            <person name="Engh I."/>
            <person name="Espagne E."/>
            <person name="Halliday K."/>
            <person name="Kamerewerd J."/>
            <person name="Kempken F."/>
            <person name="Knab B."/>
            <person name="Kuo H.-C."/>
            <person name="Osiewacz H.D."/>
            <person name="Poeggeler S."/>
            <person name="Read N.D."/>
            <person name="Seiler S."/>
            <person name="Smith K.M."/>
            <person name="Zickler D."/>
            <person name="Kueck U."/>
            <person name="Freitag M."/>
        </authorList>
    </citation>
    <scope>NUCLEOTIDE SEQUENCE [LARGE SCALE GENOMIC DNA]</scope>
    <source>
        <strain>ATCC MYA-333 / DSM 997 / K(L3346) / K-hell</strain>
    </source>
</reference>
<name>CBPYA_SORMK</name>
<dbReference type="EC" id="3.4.16.5"/>
<dbReference type="EMBL" id="CABT02000005">
    <property type="protein sequence ID" value="CCC08363.1"/>
    <property type="molecule type" value="Genomic_DNA"/>
</dbReference>
<dbReference type="RefSeq" id="XP_003348887.1">
    <property type="nucleotide sequence ID" value="XM_003348839.1"/>
</dbReference>
<dbReference type="SMR" id="D1ZG13"/>
<dbReference type="FunCoup" id="D1ZG13">
    <property type="interactions" value="803"/>
</dbReference>
<dbReference type="STRING" id="771870.D1ZG13"/>
<dbReference type="ESTHER" id="neucr-CBPYA">
    <property type="family name" value="Carboxypeptidase_S10"/>
</dbReference>
<dbReference type="MEROPS" id="S10.001"/>
<dbReference type="GlyCosmos" id="D1ZG13">
    <property type="glycosylation" value="2 sites, No reported glycans"/>
</dbReference>
<dbReference type="GeneID" id="10806348"/>
<dbReference type="KEGG" id="smp:10806348"/>
<dbReference type="VEuPathDB" id="FungiDB:SMAC_01911"/>
<dbReference type="eggNOG" id="KOG1282">
    <property type="taxonomic scope" value="Eukaryota"/>
</dbReference>
<dbReference type="HOGENOM" id="CLU_008523_10_4_1"/>
<dbReference type="InParanoid" id="D1ZG13"/>
<dbReference type="OMA" id="GDWMKPF"/>
<dbReference type="OrthoDB" id="443318at2759"/>
<dbReference type="Proteomes" id="UP000001881">
    <property type="component" value="Unassembled WGS sequence"/>
</dbReference>
<dbReference type="GO" id="GO:0000324">
    <property type="term" value="C:fungal-type vacuole"/>
    <property type="evidence" value="ECO:0007669"/>
    <property type="project" value="TreeGrafter"/>
</dbReference>
<dbReference type="GO" id="GO:0004185">
    <property type="term" value="F:serine-type carboxypeptidase activity"/>
    <property type="evidence" value="ECO:0007669"/>
    <property type="project" value="UniProtKB-EC"/>
</dbReference>
<dbReference type="GO" id="GO:0006508">
    <property type="term" value="P:proteolysis"/>
    <property type="evidence" value="ECO:0007669"/>
    <property type="project" value="UniProtKB-KW"/>
</dbReference>
<dbReference type="FunFam" id="1.10.287.410:FF:000001">
    <property type="entry name" value="Carboxypeptidase Y"/>
    <property type="match status" value="1"/>
</dbReference>
<dbReference type="Gene3D" id="1.10.287.410">
    <property type="match status" value="1"/>
</dbReference>
<dbReference type="Gene3D" id="3.40.50.1820">
    <property type="entry name" value="alpha/beta hydrolase"/>
    <property type="match status" value="1"/>
</dbReference>
<dbReference type="InterPro" id="IPR029058">
    <property type="entry name" value="AB_hydrolase_fold"/>
</dbReference>
<dbReference type="InterPro" id="IPR001563">
    <property type="entry name" value="Peptidase_S10"/>
</dbReference>
<dbReference type="InterPro" id="IPR008442">
    <property type="entry name" value="Propeptide_carboxypepY"/>
</dbReference>
<dbReference type="InterPro" id="IPR018202">
    <property type="entry name" value="Ser_caboxypep_ser_AS"/>
</dbReference>
<dbReference type="PANTHER" id="PTHR11802:SF113">
    <property type="entry name" value="SERINE CARBOXYPEPTIDASE CTSA-4.1"/>
    <property type="match status" value="1"/>
</dbReference>
<dbReference type="PANTHER" id="PTHR11802">
    <property type="entry name" value="SERINE PROTEASE FAMILY S10 SERINE CARBOXYPEPTIDASE"/>
    <property type="match status" value="1"/>
</dbReference>
<dbReference type="Pfam" id="PF05388">
    <property type="entry name" value="Carbpep_Y_N"/>
    <property type="match status" value="1"/>
</dbReference>
<dbReference type="Pfam" id="PF00450">
    <property type="entry name" value="Peptidase_S10"/>
    <property type="match status" value="1"/>
</dbReference>
<dbReference type="PRINTS" id="PR00724">
    <property type="entry name" value="CRBOXYPTASEC"/>
</dbReference>
<dbReference type="SUPFAM" id="SSF53474">
    <property type="entry name" value="alpha/beta-Hydrolases"/>
    <property type="match status" value="1"/>
</dbReference>
<dbReference type="PROSITE" id="PS00131">
    <property type="entry name" value="CARBOXYPEPT_SER_SER"/>
    <property type="match status" value="1"/>
</dbReference>
<proteinExistence type="inferred from homology"/>